<organismHost>
    <name type="scientific">Acanthamoeba polyphaga</name>
    <name type="common">Amoeba</name>
    <dbReference type="NCBI Taxonomy" id="5757"/>
</organismHost>
<keyword id="KW-1185">Reference proteome</keyword>
<feature type="chain" id="PRO_0000253230" description="Uncharacterized protein L199">
    <location>
        <begin position="1"/>
        <end position="234"/>
    </location>
</feature>
<feature type="region of interest" description="Disordered" evidence="1">
    <location>
        <begin position="62"/>
        <end position="99"/>
    </location>
</feature>
<feature type="compositionally biased region" description="Polar residues" evidence="1">
    <location>
        <begin position="67"/>
        <end position="79"/>
    </location>
</feature>
<name>YL199_MIMIV</name>
<accession>Q5UQ18</accession>
<protein>
    <recommendedName>
        <fullName>Uncharacterized protein L199</fullName>
    </recommendedName>
</protein>
<evidence type="ECO:0000256" key="1">
    <source>
        <dbReference type="SAM" id="MobiDB-lite"/>
    </source>
</evidence>
<gene>
    <name type="ordered locus">MIMI_L199</name>
</gene>
<dbReference type="EMBL" id="AY653733">
    <property type="protein sequence ID" value="AAV50472.1"/>
    <property type="molecule type" value="Genomic_DNA"/>
</dbReference>
<dbReference type="KEGG" id="vg:9924805"/>
<dbReference type="Proteomes" id="UP000001134">
    <property type="component" value="Genome"/>
</dbReference>
<proteinExistence type="predicted"/>
<sequence length="234" mass="26995">MAMDPNEIALFRIDITEFIDKCLISLNNNFSTDQEFKFLKQLMNYYYRTKFLYTKKTENSDNEESISDLNSDNPGNSEPSDVESFVLSDEDENSEKDFSYGEFSDYDDKSIQCKILGINSDDETNCDNDQDIPVVRQKTTNKKSTHHKFQEETISIDQLIQECRVFYDKNTHKTNDTDKETIQNINSISEAGEYIVNSLSPCFNLSVVESSMEFIDGSDNIDYTDPTEYCNIVS</sequence>
<organism>
    <name type="scientific">Acanthamoeba polyphaga mimivirus</name>
    <name type="common">APMV</name>
    <dbReference type="NCBI Taxonomy" id="212035"/>
    <lineage>
        <taxon>Viruses</taxon>
        <taxon>Varidnaviria</taxon>
        <taxon>Bamfordvirae</taxon>
        <taxon>Nucleocytoviricota</taxon>
        <taxon>Megaviricetes</taxon>
        <taxon>Imitervirales</taxon>
        <taxon>Mimiviridae</taxon>
        <taxon>Megamimivirinae</taxon>
        <taxon>Mimivirus</taxon>
        <taxon>Mimivirus bradfordmassiliense</taxon>
    </lineage>
</organism>
<reference key="1">
    <citation type="journal article" date="2004" name="Science">
        <title>The 1.2-megabase genome sequence of Mimivirus.</title>
        <authorList>
            <person name="Raoult D."/>
            <person name="Audic S."/>
            <person name="Robert C."/>
            <person name="Abergel C."/>
            <person name="Renesto P."/>
            <person name="Ogata H."/>
            <person name="La Scola B."/>
            <person name="Susan M."/>
            <person name="Claverie J.-M."/>
        </authorList>
    </citation>
    <scope>NUCLEOTIDE SEQUENCE [LARGE SCALE GENOMIC DNA]</scope>
    <source>
        <strain>Rowbotham-Bradford</strain>
    </source>
</reference>